<protein>
    <recommendedName>
        <fullName>GPI ethanolamine phosphate transferase 3</fullName>
        <ecNumber>2.-.-.-</ecNumber>
    </recommendedName>
    <alternativeName>
        <fullName>Glycosylphosphatidylinositol-anchor biosynthesis protein 13</fullName>
    </alternativeName>
</protein>
<feature type="chain" id="PRO_0000316600" description="GPI ethanolamine phosphate transferase 3">
    <location>
        <begin position="1"/>
        <end position="918"/>
    </location>
</feature>
<feature type="transmembrane region" description="Helical" evidence="2">
    <location>
        <begin position="16"/>
        <end position="36"/>
    </location>
</feature>
<feature type="transmembrane region" description="Helical" evidence="2">
    <location>
        <begin position="429"/>
        <end position="449"/>
    </location>
</feature>
<feature type="transmembrane region" description="Helical" evidence="2">
    <location>
        <begin position="459"/>
        <end position="479"/>
    </location>
</feature>
<feature type="transmembrane region" description="Helical" evidence="2">
    <location>
        <begin position="486"/>
        <end position="506"/>
    </location>
</feature>
<feature type="transmembrane region" description="Helical" evidence="2">
    <location>
        <begin position="523"/>
        <end position="543"/>
    </location>
</feature>
<feature type="transmembrane region" description="Helical" evidence="2">
    <location>
        <begin position="547"/>
        <end position="563"/>
    </location>
</feature>
<feature type="transmembrane region" description="Helical" evidence="2">
    <location>
        <begin position="567"/>
        <end position="587"/>
    </location>
</feature>
<feature type="transmembrane region" description="Helical" evidence="2">
    <location>
        <begin position="616"/>
        <end position="636"/>
    </location>
</feature>
<feature type="transmembrane region" description="Helical" evidence="2">
    <location>
        <begin position="651"/>
        <end position="671"/>
    </location>
</feature>
<feature type="transmembrane region" description="Helical" evidence="2">
    <location>
        <begin position="687"/>
        <end position="707"/>
    </location>
</feature>
<feature type="transmembrane region" description="Helical" evidence="2">
    <location>
        <begin position="715"/>
        <end position="735"/>
    </location>
</feature>
<feature type="transmembrane region" description="Helical" evidence="2">
    <location>
        <begin position="738"/>
        <end position="758"/>
    </location>
</feature>
<feature type="transmembrane region" description="Helical" evidence="2">
    <location>
        <begin position="762"/>
        <end position="782"/>
    </location>
</feature>
<feature type="transmembrane region" description="Helical" evidence="2">
    <location>
        <begin position="813"/>
        <end position="833"/>
    </location>
</feature>
<feature type="transmembrane region" description="Helical" evidence="2">
    <location>
        <begin position="853"/>
        <end position="873"/>
    </location>
</feature>
<feature type="transmembrane region" description="Helical" evidence="2">
    <location>
        <begin position="887"/>
        <end position="907"/>
    </location>
</feature>
<feature type="glycosylation site" description="N-linked (GlcNAc...) asparagine" evidence="2">
    <location>
        <position position="54"/>
    </location>
</feature>
<feature type="glycosylation site" description="N-linked (GlcNAc...) asparagine" evidence="2">
    <location>
        <position position="71"/>
    </location>
</feature>
<feature type="glycosylation site" description="N-linked (GlcNAc...) asparagine" evidence="2">
    <location>
        <position position="101"/>
    </location>
</feature>
<feature type="glycosylation site" description="N-linked (GlcNAc...) asparagine" evidence="2">
    <location>
        <position position="197"/>
    </location>
</feature>
<feature type="glycosylation site" description="N-linked (GlcNAc...) asparagine" evidence="2">
    <location>
        <position position="399"/>
    </location>
</feature>
<organism>
    <name type="scientific">Schizosaccharomyces pombe (strain 972 / ATCC 24843)</name>
    <name type="common">Fission yeast</name>
    <dbReference type="NCBI Taxonomy" id="284812"/>
    <lineage>
        <taxon>Eukaryota</taxon>
        <taxon>Fungi</taxon>
        <taxon>Dikarya</taxon>
        <taxon>Ascomycota</taxon>
        <taxon>Taphrinomycotina</taxon>
        <taxon>Schizosaccharomycetes</taxon>
        <taxon>Schizosaccharomycetales</taxon>
        <taxon>Schizosaccharomycetaceae</taxon>
        <taxon>Schizosaccharomyces</taxon>
    </lineage>
</organism>
<sequence length="918" mass="104993">MEEKRVKCKKKLTSTIGTWKYIQACIFFAIILISNFYGLKSFTDGFLLRRAVLNQTSLCENPPADVREWKNSSGCWAPKIFERAVIVIIDALRYDFLIPYNDSNYYHNAFTTPYETSVLHPENSYLTQFIADAPTTTSQRLKGLTTGSLPTFIDLGSNFAGTNIDEDNLLLQWKSLDKQIVLLGDDTWDVLFHDYLNETLSQPAFSFNVPDLHGVDNKVNQYVFDYIKDANFDVLIAHYLGVDHVGHRLGPDHPTMRDKLNQMDRCVKEMMDLLDDSTLLIVMGDHGMDNKGNHGGDSFDEINSVLWMYSKKPTFGYLKQPGKVLSANQVDLVPTLSLLLGNPIPYGNLGTLIPEPFYYYGDEYLSKAQKINIGQLNRFFSEYDLDASDFLSSSVHKNNNSYLDQYFLDFDYARDAFSYFKAIWAEFSLFPMIIGFLLLIIGGFNLALLMQDKSVIFRMSANMAPSVMKCLPVCLILILANNELHSPFPAEFYVLLPSFYILLNSFNQKLMEYFKGFVKLDYFSIFITFLHVCSFGSNSFTVWEDRLCHFLIITIGLVMFCKCFSEMSPLFACSTYSALAFILLQVISSYVTNCREEQGAFCVSTYISTPDNSLRTLIVLALMALSSIILPLILQLHLRRVLGLSLKLYHLSILYFFELISSIFWIAHHVFANDALLEKQYHHVLYSLANTYVICILGVLIWQFFLLSRSKFAKINVIERSYFVFALLYSFLSFLQRPLGHLSLFSCFLQILLLIQLKQWQPSVGHNFFSVTLGLLGLSHFFTTGNQAAISSLDWNFAFIHSKSAENQAISAIFMFLHTVGAPILTCISIPLFSFEPLSKKNRFLINLFRFSFSFILYNLLISTSTVFFAGFFRRHLMVWKVFAPRFMLSGILLVTHQLFVLIQCFGSSVVKFPEDAE</sequence>
<keyword id="KW-0961">Cell wall biogenesis/degradation</keyword>
<keyword id="KW-0256">Endoplasmic reticulum</keyword>
<keyword id="KW-0325">Glycoprotein</keyword>
<keyword id="KW-0337">GPI-anchor biosynthesis</keyword>
<keyword id="KW-0472">Membrane</keyword>
<keyword id="KW-1185">Reference proteome</keyword>
<keyword id="KW-0808">Transferase</keyword>
<keyword id="KW-0812">Transmembrane</keyword>
<keyword id="KW-1133">Transmembrane helix</keyword>
<dbReference type="EC" id="2.-.-.-"/>
<dbReference type="EMBL" id="AB004539">
    <property type="protein sequence ID" value="BAA21454.1"/>
    <property type="molecule type" value="Genomic_DNA"/>
</dbReference>
<dbReference type="EMBL" id="CU329671">
    <property type="protein sequence ID" value="CAA16901.1"/>
    <property type="molecule type" value="Genomic_DNA"/>
</dbReference>
<dbReference type="PIR" id="T40030">
    <property type="entry name" value="T40030"/>
</dbReference>
<dbReference type="RefSeq" id="NP_595538.1">
    <property type="nucleotide sequence ID" value="NM_001021449.2"/>
</dbReference>
<dbReference type="SMR" id="O13663"/>
<dbReference type="FunCoup" id="O13663">
    <property type="interactions" value="174"/>
</dbReference>
<dbReference type="STRING" id="284812.O13663"/>
<dbReference type="GlyCosmos" id="O13663">
    <property type="glycosylation" value="5 sites, No reported glycans"/>
</dbReference>
<dbReference type="iPTMnet" id="O13663"/>
<dbReference type="PaxDb" id="4896-SPBC27B12.06.1"/>
<dbReference type="EnsemblFungi" id="SPBC27B12.06.1">
    <property type="protein sequence ID" value="SPBC27B12.06.1:pep"/>
    <property type="gene ID" value="SPBC27B12.06"/>
</dbReference>
<dbReference type="GeneID" id="2540594"/>
<dbReference type="KEGG" id="spo:2540594"/>
<dbReference type="PomBase" id="SPBC27B12.06">
    <property type="gene designation" value="gpi13"/>
</dbReference>
<dbReference type="VEuPathDB" id="FungiDB:SPBC27B12.06"/>
<dbReference type="eggNOG" id="KOG2126">
    <property type="taxonomic scope" value="Eukaryota"/>
</dbReference>
<dbReference type="HOGENOM" id="CLU_004298_1_0_1"/>
<dbReference type="InParanoid" id="O13663"/>
<dbReference type="OMA" id="EDEYVIM"/>
<dbReference type="PhylomeDB" id="O13663"/>
<dbReference type="UniPathway" id="UPA00196"/>
<dbReference type="PRO" id="PR:O13663"/>
<dbReference type="Proteomes" id="UP000002485">
    <property type="component" value="Chromosome II"/>
</dbReference>
<dbReference type="GO" id="GO:0005783">
    <property type="term" value="C:endoplasmic reticulum"/>
    <property type="evidence" value="ECO:0007005"/>
    <property type="project" value="PomBase"/>
</dbReference>
<dbReference type="GO" id="GO:0005789">
    <property type="term" value="C:endoplasmic reticulum membrane"/>
    <property type="evidence" value="ECO:0000318"/>
    <property type="project" value="GO_Central"/>
</dbReference>
<dbReference type="GO" id="GO:0051377">
    <property type="term" value="F:mannose-ethanolamine phosphotransferase activity"/>
    <property type="evidence" value="ECO:0000318"/>
    <property type="project" value="GO_Central"/>
</dbReference>
<dbReference type="GO" id="GO:0071555">
    <property type="term" value="P:cell wall organization"/>
    <property type="evidence" value="ECO:0007669"/>
    <property type="project" value="UniProtKB-KW"/>
</dbReference>
<dbReference type="GO" id="GO:0006506">
    <property type="term" value="P:GPI anchor biosynthetic process"/>
    <property type="evidence" value="ECO:0000318"/>
    <property type="project" value="GO_Central"/>
</dbReference>
<dbReference type="CDD" id="cd16023">
    <property type="entry name" value="GPI_EPT_3"/>
    <property type="match status" value="1"/>
</dbReference>
<dbReference type="FunFam" id="3.40.720.10:FF:000115">
    <property type="entry name" value="GPI ethanolamine phosphate transferase 3"/>
    <property type="match status" value="1"/>
</dbReference>
<dbReference type="Gene3D" id="3.40.720.10">
    <property type="entry name" value="Alkaline Phosphatase, subunit A"/>
    <property type="match status" value="1"/>
</dbReference>
<dbReference type="InterPro" id="IPR017850">
    <property type="entry name" value="Alkaline_phosphatase_core_sf"/>
</dbReference>
<dbReference type="InterPro" id="IPR002591">
    <property type="entry name" value="Phosphodiest/P_Trfase"/>
</dbReference>
<dbReference type="InterPro" id="IPR037675">
    <property type="entry name" value="PIG-O_N"/>
</dbReference>
<dbReference type="InterPro" id="IPR039524">
    <property type="entry name" value="PIGO/GPI13"/>
</dbReference>
<dbReference type="PANTHER" id="PTHR23071:SF1">
    <property type="entry name" value="GPI ETHANOLAMINE PHOSPHATE TRANSFERASE 3"/>
    <property type="match status" value="1"/>
</dbReference>
<dbReference type="PANTHER" id="PTHR23071">
    <property type="entry name" value="PHOSPHATIDYLINOSITOL GLYCAN"/>
    <property type="match status" value="1"/>
</dbReference>
<dbReference type="Pfam" id="PF01663">
    <property type="entry name" value="Phosphodiest"/>
    <property type="match status" value="1"/>
</dbReference>
<dbReference type="SUPFAM" id="SSF53649">
    <property type="entry name" value="Alkaline phosphatase-like"/>
    <property type="match status" value="1"/>
</dbReference>
<reference key="1">
    <citation type="journal article" date="2000" name="Yeast">
        <title>A 38 kb segment containing the cdc2 gene from the left arm of fission yeast chromosome II: sequence analysis and characterization of the genomic DNA and cDNAs encoded on the segment.</title>
        <authorList>
            <person name="Machida M."/>
            <person name="Yamazaki S."/>
            <person name="Kunihiro S."/>
            <person name="Tanaka T."/>
            <person name="Kushida N."/>
            <person name="Jinno K."/>
            <person name="Haikawa Y."/>
            <person name="Yamazaki J."/>
            <person name="Yamamoto S."/>
            <person name="Sekine M."/>
            <person name="Oguchi A."/>
            <person name="Nagai Y."/>
            <person name="Sakai M."/>
            <person name="Aoki K."/>
            <person name="Ogura K."/>
            <person name="Kudoh Y."/>
            <person name="Kikuchi H."/>
            <person name="Zhang M.Q."/>
            <person name="Yanagida M."/>
        </authorList>
    </citation>
    <scope>NUCLEOTIDE SEQUENCE [LARGE SCALE GENOMIC DNA]</scope>
    <source>
        <strain>972 / ATCC 24843</strain>
    </source>
</reference>
<reference key="2">
    <citation type="journal article" date="2002" name="Nature">
        <title>The genome sequence of Schizosaccharomyces pombe.</title>
        <authorList>
            <person name="Wood V."/>
            <person name="Gwilliam R."/>
            <person name="Rajandream M.A."/>
            <person name="Lyne M.H."/>
            <person name="Lyne R."/>
            <person name="Stewart A."/>
            <person name="Sgouros J.G."/>
            <person name="Peat N."/>
            <person name="Hayles J."/>
            <person name="Baker S.G."/>
            <person name="Basham D."/>
            <person name="Bowman S."/>
            <person name="Brooks K."/>
            <person name="Brown D."/>
            <person name="Brown S."/>
            <person name="Chillingworth T."/>
            <person name="Churcher C.M."/>
            <person name="Collins M."/>
            <person name="Connor R."/>
            <person name="Cronin A."/>
            <person name="Davis P."/>
            <person name="Feltwell T."/>
            <person name="Fraser A."/>
            <person name="Gentles S."/>
            <person name="Goble A."/>
            <person name="Hamlin N."/>
            <person name="Harris D.E."/>
            <person name="Hidalgo J."/>
            <person name="Hodgson G."/>
            <person name="Holroyd S."/>
            <person name="Hornsby T."/>
            <person name="Howarth S."/>
            <person name="Huckle E.J."/>
            <person name="Hunt S."/>
            <person name="Jagels K."/>
            <person name="James K.D."/>
            <person name="Jones L."/>
            <person name="Jones M."/>
            <person name="Leather S."/>
            <person name="McDonald S."/>
            <person name="McLean J."/>
            <person name="Mooney P."/>
            <person name="Moule S."/>
            <person name="Mungall K.L."/>
            <person name="Murphy L.D."/>
            <person name="Niblett D."/>
            <person name="Odell C."/>
            <person name="Oliver K."/>
            <person name="O'Neil S."/>
            <person name="Pearson D."/>
            <person name="Quail M.A."/>
            <person name="Rabbinowitsch E."/>
            <person name="Rutherford K.M."/>
            <person name="Rutter S."/>
            <person name="Saunders D."/>
            <person name="Seeger K."/>
            <person name="Sharp S."/>
            <person name="Skelton J."/>
            <person name="Simmonds M.N."/>
            <person name="Squares R."/>
            <person name="Squares S."/>
            <person name="Stevens K."/>
            <person name="Taylor K."/>
            <person name="Taylor R.G."/>
            <person name="Tivey A."/>
            <person name="Walsh S.V."/>
            <person name="Warren T."/>
            <person name="Whitehead S."/>
            <person name="Woodward J.R."/>
            <person name="Volckaert G."/>
            <person name="Aert R."/>
            <person name="Robben J."/>
            <person name="Grymonprez B."/>
            <person name="Weltjens I."/>
            <person name="Vanstreels E."/>
            <person name="Rieger M."/>
            <person name="Schaefer M."/>
            <person name="Mueller-Auer S."/>
            <person name="Gabel C."/>
            <person name="Fuchs M."/>
            <person name="Duesterhoeft A."/>
            <person name="Fritzc C."/>
            <person name="Holzer E."/>
            <person name="Moestl D."/>
            <person name="Hilbert H."/>
            <person name="Borzym K."/>
            <person name="Langer I."/>
            <person name="Beck A."/>
            <person name="Lehrach H."/>
            <person name="Reinhardt R."/>
            <person name="Pohl T.M."/>
            <person name="Eger P."/>
            <person name="Zimmermann W."/>
            <person name="Wedler H."/>
            <person name="Wambutt R."/>
            <person name="Purnelle B."/>
            <person name="Goffeau A."/>
            <person name="Cadieu E."/>
            <person name="Dreano S."/>
            <person name="Gloux S."/>
            <person name="Lelaure V."/>
            <person name="Mottier S."/>
            <person name="Galibert F."/>
            <person name="Aves S.J."/>
            <person name="Xiang Z."/>
            <person name="Hunt C."/>
            <person name="Moore K."/>
            <person name="Hurst S.M."/>
            <person name="Lucas M."/>
            <person name="Rochet M."/>
            <person name="Gaillardin C."/>
            <person name="Tallada V.A."/>
            <person name="Garzon A."/>
            <person name="Thode G."/>
            <person name="Daga R.R."/>
            <person name="Cruzado L."/>
            <person name="Jimenez J."/>
            <person name="Sanchez M."/>
            <person name="del Rey F."/>
            <person name="Benito J."/>
            <person name="Dominguez A."/>
            <person name="Revuelta J.L."/>
            <person name="Moreno S."/>
            <person name="Armstrong J."/>
            <person name="Forsburg S.L."/>
            <person name="Cerutti L."/>
            <person name="Lowe T."/>
            <person name="McCombie W.R."/>
            <person name="Paulsen I."/>
            <person name="Potashkin J."/>
            <person name="Shpakovski G.V."/>
            <person name="Ussery D."/>
            <person name="Barrell B.G."/>
            <person name="Nurse P."/>
        </authorList>
    </citation>
    <scope>NUCLEOTIDE SEQUENCE [LARGE SCALE GENOMIC DNA]</scope>
    <source>
        <strain>972 / ATCC 24843</strain>
    </source>
</reference>
<reference key="3">
    <citation type="journal article" date="2006" name="Nat. Biotechnol.">
        <title>ORFeome cloning and global analysis of protein localization in the fission yeast Schizosaccharomyces pombe.</title>
        <authorList>
            <person name="Matsuyama A."/>
            <person name="Arai R."/>
            <person name="Yashiroda Y."/>
            <person name="Shirai A."/>
            <person name="Kamata A."/>
            <person name="Sekido S."/>
            <person name="Kobayashi Y."/>
            <person name="Hashimoto A."/>
            <person name="Hamamoto M."/>
            <person name="Hiraoka Y."/>
            <person name="Horinouchi S."/>
            <person name="Yoshida M."/>
        </authorList>
    </citation>
    <scope>SUBCELLULAR LOCATION [LARGE SCALE ANALYSIS]</scope>
</reference>
<evidence type="ECO:0000250" key="1"/>
<evidence type="ECO:0000255" key="2"/>
<evidence type="ECO:0000269" key="3">
    <source>
    </source>
</evidence>
<evidence type="ECO:0000305" key="4"/>
<name>GPI13_SCHPO</name>
<proteinExistence type="inferred from homology"/>
<comment type="function">
    <text evidence="1">Involved in glycosylphosphatidylinositol-anchor biosynthesis. Transfers ethanolamine phosphate to the GPI third mannose which links the GPI-anchor to the C-terminus of the proteins by an amide bond. Involved in cell wall biosynthesis (By similarity).</text>
</comment>
<comment type="pathway">
    <text>Glycolipid biosynthesis; glycosylphosphatidylinositol-anchor biosynthesis.</text>
</comment>
<comment type="subcellular location">
    <subcellularLocation>
        <location evidence="3">Endoplasmic reticulum membrane</location>
        <topology evidence="3">Multi-pass membrane protein</topology>
    </subcellularLocation>
</comment>
<comment type="PTM">
    <text evidence="1">Glycosylated.</text>
</comment>
<comment type="similarity">
    <text evidence="4">Belongs to the PIGG/PIGN/PIGO family. PIGO subfamily.</text>
</comment>
<gene>
    <name type="primary">gpi13</name>
    <name type="ORF">pi072</name>
    <name type="ORF">SPBC27B12.06</name>
</gene>
<accession>O13663</accession>